<comment type="function">
    <text evidence="1">Succinyl-CoA synthetase functions in the citric acid cycle (TCA), coupling the hydrolysis of succinyl-CoA to the synthesis of either ATP or GTP and thus represents the only step of substrate-level phosphorylation in the TCA. The beta subunit provides nucleotide specificity of the enzyme and binds the substrate succinate, while the binding sites for coenzyme A and phosphate are found in the alpha subunit.</text>
</comment>
<comment type="catalytic activity">
    <reaction evidence="1">
        <text>succinate + ATP + CoA = succinyl-CoA + ADP + phosphate</text>
        <dbReference type="Rhea" id="RHEA:17661"/>
        <dbReference type="ChEBI" id="CHEBI:30031"/>
        <dbReference type="ChEBI" id="CHEBI:30616"/>
        <dbReference type="ChEBI" id="CHEBI:43474"/>
        <dbReference type="ChEBI" id="CHEBI:57287"/>
        <dbReference type="ChEBI" id="CHEBI:57292"/>
        <dbReference type="ChEBI" id="CHEBI:456216"/>
        <dbReference type="EC" id="6.2.1.5"/>
    </reaction>
    <physiologicalReaction direction="right-to-left" evidence="1">
        <dbReference type="Rhea" id="RHEA:17663"/>
    </physiologicalReaction>
</comment>
<comment type="catalytic activity">
    <reaction evidence="1">
        <text>GTP + succinate + CoA = succinyl-CoA + GDP + phosphate</text>
        <dbReference type="Rhea" id="RHEA:22120"/>
        <dbReference type="ChEBI" id="CHEBI:30031"/>
        <dbReference type="ChEBI" id="CHEBI:37565"/>
        <dbReference type="ChEBI" id="CHEBI:43474"/>
        <dbReference type="ChEBI" id="CHEBI:57287"/>
        <dbReference type="ChEBI" id="CHEBI:57292"/>
        <dbReference type="ChEBI" id="CHEBI:58189"/>
    </reaction>
    <physiologicalReaction direction="right-to-left" evidence="1">
        <dbReference type="Rhea" id="RHEA:22122"/>
    </physiologicalReaction>
</comment>
<comment type="cofactor">
    <cofactor evidence="1">
        <name>Mg(2+)</name>
        <dbReference type="ChEBI" id="CHEBI:18420"/>
    </cofactor>
    <text evidence="1">Binds 1 Mg(2+) ion per subunit.</text>
</comment>
<comment type="pathway">
    <text evidence="1">Carbohydrate metabolism; tricarboxylic acid cycle; succinate from succinyl-CoA (ligase route): step 1/1.</text>
</comment>
<comment type="subunit">
    <text evidence="1">Heterotetramer of two alpha and two beta subunits.</text>
</comment>
<comment type="similarity">
    <text evidence="1">Belongs to the succinate/malate CoA ligase beta subunit family.</text>
</comment>
<accession>A4WL16</accession>
<keyword id="KW-0067">ATP-binding</keyword>
<keyword id="KW-0436">Ligase</keyword>
<keyword id="KW-0460">Magnesium</keyword>
<keyword id="KW-0479">Metal-binding</keyword>
<keyword id="KW-0547">Nucleotide-binding</keyword>
<keyword id="KW-0816">Tricarboxylic acid cycle</keyword>
<protein>
    <recommendedName>
        <fullName evidence="1">Succinate--CoA ligase [ADP-forming] subunit beta</fullName>
        <ecNumber evidence="1">6.2.1.5</ecNumber>
    </recommendedName>
    <alternativeName>
        <fullName evidence="1">Succinyl-CoA synthetase subunit beta</fullName>
        <shortName evidence="1">SCS-beta</shortName>
    </alternativeName>
</protein>
<reference key="1">
    <citation type="submission" date="2007-04" db="EMBL/GenBank/DDBJ databases">
        <title>Complete sequence of Pyrobaculum arsenaticum DSM 13514.</title>
        <authorList>
            <consortium name="US DOE Joint Genome Institute"/>
            <person name="Copeland A."/>
            <person name="Lucas S."/>
            <person name="Lapidus A."/>
            <person name="Barry K."/>
            <person name="Glavina del Rio T."/>
            <person name="Dalin E."/>
            <person name="Tice H."/>
            <person name="Pitluck S."/>
            <person name="Chain P."/>
            <person name="Malfatti S."/>
            <person name="Shin M."/>
            <person name="Vergez L."/>
            <person name="Schmutz J."/>
            <person name="Larimer F."/>
            <person name="Land M."/>
            <person name="Hauser L."/>
            <person name="Kyrpides N."/>
            <person name="Mikhailova N."/>
            <person name="Cozen A.E."/>
            <person name="Fitz-Gibbon S.T."/>
            <person name="House C.H."/>
            <person name="Saltikov C."/>
            <person name="Lowe T.M."/>
            <person name="Richardson P."/>
        </authorList>
    </citation>
    <scope>NUCLEOTIDE SEQUENCE [LARGE SCALE GENOMIC DNA]</scope>
    <source>
        <strain>ATCC 700994 / DSM 13514 / JCM 11321 / PZ6</strain>
    </source>
</reference>
<sequence length="382" mass="42274">MKLHEYEAKELFSKYGVKIPPGRVATTPEEVRKIAEEIGGPVVLKAQVVVAGRGKAGGIKVAKTPEEAYELATKMFGMNIKGLVVKKIYVTKYVEVEREMYLSLIIDRATRRYLFLASPIGGVDIEEIAKTQPEKIKRVYVDPSVGLRDYHVRSIVLWLGFKPETPQWRQASSIVQAMYNIMVDYDAELVESNPLAVTREGDVIPLDARVIVDDNALYKHPELEKALEEDPRDVSEFEMYAKKIGFHYVELDGDVGIIGNGAGLTMATMDLVYHFGGRPANFLDIGGGASRDVVKEALKVLLRHPRVKVIFMNIFGGITRADEVAAGVEAALAEEGGTKKKIVVRMKGTNEELGRQMLAKLGIPLYENAEEAAQKAVELARA</sequence>
<name>SUCC_PYRAR</name>
<dbReference type="EC" id="6.2.1.5" evidence="1"/>
<dbReference type="EMBL" id="CP000660">
    <property type="protein sequence ID" value="ABP51083.1"/>
    <property type="molecule type" value="Genomic_DNA"/>
</dbReference>
<dbReference type="SMR" id="A4WL16"/>
<dbReference type="STRING" id="340102.Pars_1529"/>
<dbReference type="KEGG" id="pas:Pars_1529"/>
<dbReference type="HOGENOM" id="CLU_037430_0_2_2"/>
<dbReference type="OrthoDB" id="146449at2157"/>
<dbReference type="PhylomeDB" id="A4WL16"/>
<dbReference type="UniPathway" id="UPA00223">
    <property type="reaction ID" value="UER00999"/>
</dbReference>
<dbReference type="Proteomes" id="UP000001567">
    <property type="component" value="Chromosome"/>
</dbReference>
<dbReference type="GO" id="GO:0042709">
    <property type="term" value="C:succinate-CoA ligase complex"/>
    <property type="evidence" value="ECO:0007669"/>
    <property type="project" value="TreeGrafter"/>
</dbReference>
<dbReference type="GO" id="GO:0005524">
    <property type="term" value="F:ATP binding"/>
    <property type="evidence" value="ECO:0007669"/>
    <property type="project" value="UniProtKB-UniRule"/>
</dbReference>
<dbReference type="GO" id="GO:0000287">
    <property type="term" value="F:magnesium ion binding"/>
    <property type="evidence" value="ECO:0007669"/>
    <property type="project" value="UniProtKB-UniRule"/>
</dbReference>
<dbReference type="GO" id="GO:0004775">
    <property type="term" value="F:succinate-CoA ligase (ADP-forming) activity"/>
    <property type="evidence" value="ECO:0007669"/>
    <property type="project" value="UniProtKB-UniRule"/>
</dbReference>
<dbReference type="GO" id="GO:0004776">
    <property type="term" value="F:succinate-CoA ligase (GDP-forming) activity"/>
    <property type="evidence" value="ECO:0007669"/>
    <property type="project" value="RHEA"/>
</dbReference>
<dbReference type="GO" id="GO:0006104">
    <property type="term" value="P:succinyl-CoA metabolic process"/>
    <property type="evidence" value="ECO:0007669"/>
    <property type="project" value="TreeGrafter"/>
</dbReference>
<dbReference type="GO" id="GO:0006099">
    <property type="term" value="P:tricarboxylic acid cycle"/>
    <property type="evidence" value="ECO:0007669"/>
    <property type="project" value="UniProtKB-UniRule"/>
</dbReference>
<dbReference type="FunFam" id="3.30.1490.20:FF:000014">
    <property type="entry name" value="Succinate--CoA ligase [ADP-forming] subunit beta"/>
    <property type="match status" value="1"/>
</dbReference>
<dbReference type="FunFam" id="3.30.470.20:FF:000002">
    <property type="entry name" value="Succinate--CoA ligase [ADP-forming] subunit beta"/>
    <property type="match status" value="1"/>
</dbReference>
<dbReference type="FunFam" id="3.40.50.261:FF:000007">
    <property type="entry name" value="Succinate--CoA ligase [ADP-forming] subunit beta"/>
    <property type="match status" value="1"/>
</dbReference>
<dbReference type="Gene3D" id="3.30.1490.20">
    <property type="entry name" value="ATP-grasp fold, A domain"/>
    <property type="match status" value="1"/>
</dbReference>
<dbReference type="Gene3D" id="3.30.470.20">
    <property type="entry name" value="ATP-grasp fold, B domain"/>
    <property type="match status" value="1"/>
</dbReference>
<dbReference type="Gene3D" id="3.40.50.261">
    <property type="entry name" value="Succinyl-CoA synthetase domains"/>
    <property type="match status" value="1"/>
</dbReference>
<dbReference type="HAMAP" id="MF_00558">
    <property type="entry name" value="Succ_CoA_beta"/>
    <property type="match status" value="1"/>
</dbReference>
<dbReference type="InterPro" id="IPR011761">
    <property type="entry name" value="ATP-grasp"/>
</dbReference>
<dbReference type="InterPro" id="IPR013650">
    <property type="entry name" value="ATP-grasp_succ-CoA_synth-type"/>
</dbReference>
<dbReference type="InterPro" id="IPR013815">
    <property type="entry name" value="ATP_grasp_subdomain_1"/>
</dbReference>
<dbReference type="InterPro" id="IPR017866">
    <property type="entry name" value="Succ-CoA_synthase_bsu_CS"/>
</dbReference>
<dbReference type="InterPro" id="IPR005811">
    <property type="entry name" value="SUCC_ACL_C"/>
</dbReference>
<dbReference type="InterPro" id="IPR005809">
    <property type="entry name" value="Succ_CoA_ligase-like_bsu"/>
</dbReference>
<dbReference type="InterPro" id="IPR016102">
    <property type="entry name" value="Succinyl-CoA_synth-like"/>
</dbReference>
<dbReference type="NCBIfam" id="NF001913">
    <property type="entry name" value="PRK00696.1"/>
    <property type="match status" value="1"/>
</dbReference>
<dbReference type="NCBIfam" id="TIGR01016">
    <property type="entry name" value="sucCoAbeta"/>
    <property type="match status" value="1"/>
</dbReference>
<dbReference type="PANTHER" id="PTHR11815:SF10">
    <property type="entry name" value="SUCCINATE--COA LIGASE [GDP-FORMING] SUBUNIT BETA, MITOCHONDRIAL"/>
    <property type="match status" value="1"/>
</dbReference>
<dbReference type="PANTHER" id="PTHR11815">
    <property type="entry name" value="SUCCINYL-COA SYNTHETASE BETA CHAIN"/>
    <property type="match status" value="1"/>
</dbReference>
<dbReference type="Pfam" id="PF08442">
    <property type="entry name" value="ATP-grasp_2"/>
    <property type="match status" value="1"/>
</dbReference>
<dbReference type="Pfam" id="PF00549">
    <property type="entry name" value="Ligase_CoA"/>
    <property type="match status" value="1"/>
</dbReference>
<dbReference type="PIRSF" id="PIRSF001554">
    <property type="entry name" value="SucCS_beta"/>
    <property type="match status" value="1"/>
</dbReference>
<dbReference type="SUPFAM" id="SSF56059">
    <property type="entry name" value="Glutathione synthetase ATP-binding domain-like"/>
    <property type="match status" value="1"/>
</dbReference>
<dbReference type="SUPFAM" id="SSF52210">
    <property type="entry name" value="Succinyl-CoA synthetase domains"/>
    <property type="match status" value="1"/>
</dbReference>
<dbReference type="PROSITE" id="PS50975">
    <property type="entry name" value="ATP_GRASP"/>
    <property type="match status" value="1"/>
</dbReference>
<dbReference type="PROSITE" id="PS01217">
    <property type="entry name" value="SUCCINYL_COA_LIG_3"/>
    <property type="match status" value="1"/>
</dbReference>
<proteinExistence type="inferred from homology"/>
<evidence type="ECO:0000255" key="1">
    <source>
        <dbReference type="HAMAP-Rule" id="MF_00558"/>
    </source>
</evidence>
<gene>
    <name evidence="1" type="primary">sucC</name>
    <name type="ordered locus">Pars_1529</name>
</gene>
<feature type="chain" id="PRO_1000082180" description="Succinate--CoA ligase [ADP-forming] subunit beta">
    <location>
        <begin position="1"/>
        <end position="382"/>
    </location>
</feature>
<feature type="domain" description="ATP-grasp" evidence="1">
    <location>
        <begin position="9"/>
        <end position="240"/>
    </location>
</feature>
<feature type="binding site" evidence="1">
    <location>
        <position position="45"/>
    </location>
    <ligand>
        <name>ATP</name>
        <dbReference type="ChEBI" id="CHEBI:30616"/>
    </ligand>
</feature>
<feature type="binding site" evidence="1">
    <location>
        <begin position="52"/>
        <end position="54"/>
    </location>
    <ligand>
        <name>ATP</name>
        <dbReference type="ChEBI" id="CHEBI:30616"/>
    </ligand>
</feature>
<feature type="binding site" evidence="1">
    <location>
        <position position="94"/>
    </location>
    <ligand>
        <name>ATP</name>
        <dbReference type="ChEBI" id="CHEBI:30616"/>
    </ligand>
</feature>
<feature type="binding site" evidence="1">
    <location>
        <position position="99"/>
    </location>
    <ligand>
        <name>ATP</name>
        <dbReference type="ChEBI" id="CHEBI:30616"/>
    </ligand>
</feature>
<feature type="binding site" evidence="1">
    <location>
        <position position="193"/>
    </location>
    <ligand>
        <name>Mg(2+)</name>
        <dbReference type="ChEBI" id="CHEBI:18420"/>
    </ligand>
</feature>
<feature type="binding site" evidence="1">
    <location>
        <position position="207"/>
    </location>
    <ligand>
        <name>Mg(2+)</name>
        <dbReference type="ChEBI" id="CHEBI:18420"/>
    </ligand>
</feature>
<feature type="binding site" evidence="1">
    <location>
        <position position="260"/>
    </location>
    <ligand>
        <name>substrate</name>
        <note>ligand shared with subunit alpha</note>
    </ligand>
</feature>
<feature type="binding site" evidence="1">
    <location>
        <begin position="317"/>
        <end position="319"/>
    </location>
    <ligand>
        <name>substrate</name>
        <note>ligand shared with subunit alpha</note>
    </ligand>
</feature>
<organism>
    <name type="scientific">Pyrobaculum arsenaticum (strain DSM 13514 / JCM 11321 / PZ6)</name>
    <dbReference type="NCBI Taxonomy" id="340102"/>
    <lineage>
        <taxon>Archaea</taxon>
        <taxon>Thermoproteota</taxon>
        <taxon>Thermoprotei</taxon>
        <taxon>Thermoproteales</taxon>
        <taxon>Thermoproteaceae</taxon>
        <taxon>Pyrobaculum</taxon>
    </lineage>
</organism>